<proteinExistence type="inferred from homology"/>
<accession>Q9LHN5</accession>
<evidence type="ECO:0000305" key="1"/>
<feature type="chain" id="PRO_0000356101" description="Putative pentatricopeptide repeat-containing protein At3g18840">
    <location>
        <begin position="1"/>
        <end position="678"/>
    </location>
</feature>
<feature type="repeat" description="PPR 1">
    <location>
        <begin position="22"/>
        <end position="56"/>
    </location>
</feature>
<feature type="repeat" description="PPR 2">
    <location>
        <begin position="57"/>
        <end position="84"/>
    </location>
</feature>
<feature type="repeat" description="PPR 3">
    <location>
        <begin position="85"/>
        <end position="116"/>
    </location>
</feature>
<feature type="repeat" description="PPR 4">
    <location>
        <begin position="124"/>
        <end position="158"/>
    </location>
</feature>
<feature type="repeat" description="PPR 5">
    <location>
        <begin position="159"/>
        <end position="190"/>
    </location>
</feature>
<feature type="repeat" description="PPR 6">
    <location>
        <begin position="192"/>
        <end position="222"/>
    </location>
</feature>
<feature type="repeat" description="PPR 7">
    <location>
        <begin position="224"/>
        <end position="258"/>
    </location>
</feature>
<feature type="repeat" description="PPR 8">
    <location>
        <begin position="259"/>
        <end position="293"/>
    </location>
</feature>
<feature type="repeat" description="PPR 9">
    <location>
        <begin position="294"/>
        <end position="324"/>
    </location>
</feature>
<feature type="repeat" description="PPR 10">
    <location>
        <begin position="325"/>
        <end position="359"/>
    </location>
</feature>
<feature type="repeat" description="PPR 11">
    <location>
        <begin position="360"/>
        <end position="390"/>
    </location>
</feature>
<feature type="repeat" description="PPR 12">
    <location>
        <begin position="392"/>
        <end position="426"/>
    </location>
</feature>
<feature type="repeat" description="PPR 13">
    <location>
        <begin position="427"/>
        <end position="457"/>
    </location>
</feature>
<feature type="repeat" description="PPR 14">
    <location>
        <begin position="458"/>
        <end position="492"/>
    </location>
</feature>
<feature type="repeat" description="PPR 15">
    <location>
        <begin position="493"/>
        <end position="528"/>
    </location>
</feature>
<feature type="repeat" description="PPR 16">
    <location>
        <begin position="529"/>
        <end position="563"/>
    </location>
</feature>
<feature type="region of interest" description="Type E motif">
    <location>
        <begin position="565"/>
        <end position="640"/>
    </location>
</feature>
<feature type="region of interest" description="Type E(+) motif">
    <location>
        <begin position="641"/>
        <end position="671"/>
    </location>
</feature>
<keyword id="KW-1185">Reference proteome</keyword>
<keyword id="KW-0677">Repeat</keyword>
<protein>
    <recommendedName>
        <fullName>Putative pentatricopeptide repeat-containing protein At3g18840</fullName>
    </recommendedName>
</protein>
<organism>
    <name type="scientific">Arabidopsis thaliana</name>
    <name type="common">Mouse-ear cress</name>
    <dbReference type="NCBI Taxonomy" id="3702"/>
    <lineage>
        <taxon>Eukaryota</taxon>
        <taxon>Viridiplantae</taxon>
        <taxon>Streptophyta</taxon>
        <taxon>Embryophyta</taxon>
        <taxon>Tracheophyta</taxon>
        <taxon>Spermatophyta</taxon>
        <taxon>Magnoliopsida</taxon>
        <taxon>eudicotyledons</taxon>
        <taxon>Gunneridae</taxon>
        <taxon>Pentapetalae</taxon>
        <taxon>rosids</taxon>
        <taxon>malvids</taxon>
        <taxon>Brassicales</taxon>
        <taxon>Brassicaceae</taxon>
        <taxon>Camelineae</taxon>
        <taxon>Arabidopsis</taxon>
    </lineage>
</organism>
<sequence>MKCLKDGFLHHIRSIKSGSTLTAVSSNQLVNLYSKSGLLREARNVFDEMLERNVYSWNAVIAAYVKFNNVKEARELFESDNCERDLITYNTLLSGFAKTDGCESEAIEMFGEMHRKEKDDIWIDDFTVTTMVKLSAKLTNVFYGEQLHGVLVKTGNDGTKFAVSSLIHMYSKCGKFKEVCNIFNGSCVEFVDSVARNAMIAAYCREGDIDKALSVFWRNPELNDTISWNTLIAGYAQNGYEEEALKMAVSMEENGLKWDEHSFGAVLNVLSSLKSLKIGKEVHARVLKNGSYSNKFVSSGIVDVYCKCGNMKYAESAHLLYGFGNLYSASSMIVGYSSQGKMVEAKRLFDSLSEKNLVVWTAMFLGYLNLRQPDSVLELARAFIANETNTPDSLVMVSVLGACSLQAYMEPGKEIHGHSLRTGILMDKKLVTAFVDMYSKCGNVEYAERIFDSSFERDTVMYNAMIAGCAHHGHEAKSFQHFEDMTEGGFKPDEITFMALLSACRHRGLVLEGEKYFKSMIEAYNISPETGHYTCMIDLYGKAYRLDKAIELMEGIDQVEKDAVILGAFLNACSWNKNTELVKEVEEKLLVIEGSNGSRYIQIANAYASSGRWDEMQRIRHQMRGKELEIFSGCSWANIDKQFHMFTSSDISHYETEAIYAMLHFVTKDLSEIDEIMI</sequence>
<name>PP242_ARATH</name>
<gene>
    <name type="primary">PCMP-E92</name>
    <name type="ordered locus">At3g18840</name>
    <name type="ORF">MCB22.1</name>
</gene>
<reference key="1">
    <citation type="journal article" date="2000" name="DNA Res.">
        <title>Structural analysis of Arabidopsis thaliana chromosome 3. II. Sequence features of the 4,251,695 bp regions covered by 90 P1, TAC and BAC clones.</title>
        <authorList>
            <person name="Kaneko T."/>
            <person name="Katoh T."/>
            <person name="Sato S."/>
            <person name="Nakamura Y."/>
            <person name="Asamizu E."/>
            <person name="Tabata S."/>
        </authorList>
    </citation>
    <scope>NUCLEOTIDE SEQUENCE [LARGE SCALE GENOMIC DNA]</scope>
    <source>
        <strain>cv. Columbia</strain>
    </source>
</reference>
<reference key="2">
    <citation type="journal article" date="2017" name="Plant J.">
        <title>Araport11: a complete reannotation of the Arabidopsis thaliana reference genome.</title>
        <authorList>
            <person name="Cheng C.Y."/>
            <person name="Krishnakumar V."/>
            <person name="Chan A.P."/>
            <person name="Thibaud-Nissen F."/>
            <person name="Schobel S."/>
            <person name="Town C.D."/>
        </authorList>
    </citation>
    <scope>GENOME REANNOTATION</scope>
    <source>
        <strain>cv. Columbia</strain>
    </source>
</reference>
<reference key="3">
    <citation type="journal article" date="2004" name="Plant Cell">
        <title>Genome-wide analysis of Arabidopsis pentatricopeptide repeat proteins reveals their essential role in organelle biogenesis.</title>
        <authorList>
            <person name="Lurin C."/>
            <person name="Andres C."/>
            <person name="Aubourg S."/>
            <person name="Bellaoui M."/>
            <person name="Bitton F."/>
            <person name="Bruyere C."/>
            <person name="Caboche M."/>
            <person name="Debast C."/>
            <person name="Gualberto J."/>
            <person name="Hoffmann B."/>
            <person name="Lecharny A."/>
            <person name="Le Ret M."/>
            <person name="Martin-Magniette M.-L."/>
            <person name="Mireau H."/>
            <person name="Peeters N."/>
            <person name="Renou J.-P."/>
            <person name="Szurek B."/>
            <person name="Taconnat L."/>
            <person name="Small I."/>
        </authorList>
    </citation>
    <scope>GENE FAMILY</scope>
</reference>
<dbReference type="EMBL" id="AP002039">
    <property type="protein sequence ID" value="BAB03093.1"/>
    <property type="molecule type" value="Genomic_DNA"/>
</dbReference>
<dbReference type="EMBL" id="CP002686">
    <property type="protein sequence ID" value="AEE76154.1"/>
    <property type="molecule type" value="Genomic_DNA"/>
</dbReference>
<dbReference type="EMBL" id="CP002686">
    <property type="protein sequence ID" value="ANM63363.1"/>
    <property type="molecule type" value="Genomic_DNA"/>
</dbReference>
<dbReference type="RefSeq" id="NP_001078182.2">
    <property type="nucleotide sequence ID" value="NM_001084713.3"/>
</dbReference>
<dbReference type="RefSeq" id="NP_001325455.1">
    <property type="nucleotide sequence ID" value="NM_001338360.1"/>
</dbReference>
<dbReference type="SMR" id="Q9LHN5"/>
<dbReference type="FunCoup" id="Q9LHN5">
    <property type="interactions" value="187"/>
</dbReference>
<dbReference type="STRING" id="3702.Q9LHN5"/>
<dbReference type="PaxDb" id="3702-AT3G18840.2"/>
<dbReference type="ProteomicsDB" id="249094"/>
<dbReference type="EnsemblPlants" id="AT3G18840.2">
    <property type="protein sequence ID" value="AT3G18840.2"/>
    <property type="gene ID" value="AT3G18840"/>
</dbReference>
<dbReference type="EnsemblPlants" id="AT3G18840.3">
    <property type="protein sequence ID" value="AT3G18840.3"/>
    <property type="gene ID" value="AT3G18840"/>
</dbReference>
<dbReference type="GeneID" id="821417"/>
<dbReference type="Gramene" id="AT3G18840.2">
    <property type="protein sequence ID" value="AT3G18840.2"/>
    <property type="gene ID" value="AT3G18840"/>
</dbReference>
<dbReference type="Gramene" id="AT3G18840.3">
    <property type="protein sequence ID" value="AT3G18840.3"/>
    <property type="gene ID" value="AT3G18840"/>
</dbReference>
<dbReference type="KEGG" id="ath:AT3G18840"/>
<dbReference type="Araport" id="AT3G18840"/>
<dbReference type="TAIR" id="AT3G18840"/>
<dbReference type="eggNOG" id="KOG4197">
    <property type="taxonomic scope" value="Eukaryota"/>
</dbReference>
<dbReference type="HOGENOM" id="CLU_002706_15_10_1"/>
<dbReference type="InParanoid" id="Q9LHN5"/>
<dbReference type="OMA" id="FWRNPEL"/>
<dbReference type="PhylomeDB" id="Q9LHN5"/>
<dbReference type="PRO" id="PR:Q9LHN5"/>
<dbReference type="Proteomes" id="UP000006548">
    <property type="component" value="Chromosome 3"/>
</dbReference>
<dbReference type="ExpressionAtlas" id="Q9LHN5">
    <property type="expression patterns" value="baseline and differential"/>
</dbReference>
<dbReference type="GO" id="GO:0003723">
    <property type="term" value="F:RNA binding"/>
    <property type="evidence" value="ECO:0007669"/>
    <property type="project" value="InterPro"/>
</dbReference>
<dbReference type="GO" id="GO:0009451">
    <property type="term" value="P:RNA modification"/>
    <property type="evidence" value="ECO:0007669"/>
    <property type="project" value="InterPro"/>
</dbReference>
<dbReference type="FunFam" id="1.25.40.10:FF:000090">
    <property type="entry name" value="Pentatricopeptide repeat-containing protein, chloroplastic"/>
    <property type="match status" value="1"/>
</dbReference>
<dbReference type="FunFam" id="1.25.40.10:FF:002559">
    <property type="entry name" value="Putative pentatricopeptide repeat-containing protein At3g18840"/>
    <property type="match status" value="1"/>
</dbReference>
<dbReference type="Gene3D" id="1.25.40.10">
    <property type="entry name" value="Tetratricopeptide repeat domain"/>
    <property type="match status" value="5"/>
</dbReference>
<dbReference type="InterPro" id="IPR046848">
    <property type="entry name" value="E_motif"/>
</dbReference>
<dbReference type="InterPro" id="IPR002885">
    <property type="entry name" value="Pentatricopeptide_rpt"/>
</dbReference>
<dbReference type="InterPro" id="IPR046960">
    <property type="entry name" value="PPR_At4g14850-like_plant"/>
</dbReference>
<dbReference type="InterPro" id="IPR011990">
    <property type="entry name" value="TPR-like_helical_dom_sf"/>
</dbReference>
<dbReference type="NCBIfam" id="TIGR00756">
    <property type="entry name" value="PPR"/>
    <property type="match status" value="6"/>
</dbReference>
<dbReference type="PANTHER" id="PTHR47926">
    <property type="entry name" value="PENTATRICOPEPTIDE REPEAT-CONTAINING PROTEIN"/>
    <property type="match status" value="1"/>
</dbReference>
<dbReference type="PANTHER" id="PTHR47926:SF387">
    <property type="entry name" value="PENTATRICOPEPTIDE REPEAT-CONTAINING PROTEIN"/>
    <property type="match status" value="1"/>
</dbReference>
<dbReference type="Pfam" id="PF20431">
    <property type="entry name" value="E_motif"/>
    <property type="match status" value="1"/>
</dbReference>
<dbReference type="Pfam" id="PF01535">
    <property type="entry name" value="PPR"/>
    <property type="match status" value="5"/>
</dbReference>
<dbReference type="Pfam" id="PF13041">
    <property type="entry name" value="PPR_2"/>
    <property type="match status" value="3"/>
</dbReference>
<dbReference type="PROSITE" id="PS51375">
    <property type="entry name" value="PPR"/>
    <property type="match status" value="12"/>
</dbReference>
<comment type="similarity">
    <text evidence="1">Belongs to the PPR family. PCMP-E subfamily.</text>
</comment>
<comment type="online information" name="Pentatricopeptide repeat proteins">
    <link uri="https://ppr.plantenergy.uwa.edu.au"/>
</comment>